<accession>Q8K9Z1</accession>
<gene>
    <name type="primary">ribF</name>
    <name type="ordered locus">BUsg_143</name>
</gene>
<proteinExistence type="inferred from homology"/>
<dbReference type="EC" id="2.7.1.26" evidence="1"/>
<dbReference type="EC" id="2.7.7.2" evidence="1"/>
<dbReference type="EMBL" id="AE013218">
    <property type="protein sequence ID" value="AAM67711.1"/>
    <property type="molecule type" value="Genomic_DNA"/>
</dbReference>
<dbReference type="RefSeq" id="WP_011053678.1">
    <property type="nucleotide sequence ID" value="NC_004061.1"/>
</dbReference>
<dbReference type="SMR" id="Q8K9Z1"/>
<dbReference type="STRING" id="198804.BUsg_143"/>
<dbReference type="GeneID" id="93003613"/>
<dbReference type="KEGG" id="bas:BUsg_143"/>
<dbReference type="eggNOG" id="COG0196">
    <property type="taxonomic scope" value="Bacteria"/>
</dbReference>
<dbReference type="HOGENOM" id="CLU_048437_0_2_6"/>
<dbReference type="UniPathway" id="UPA00276">
    <property type="reaction ID" value="UER00406"/>
</dbReference>
<dbReference type="UniPathway" id="UPA00277">
    <property type="reaction ID" value="UER00407"/>
</dbReference>
<dbReference type="Proteomes" id="UP000000416">
    <property type="component" value="Chromosome"/>
</dbReference>
<dbReference type="GO" id="GO:0005524">
    <property type="term" value="F:ATP binding"/>
    <property type="evidence" value="ECO:0007669"/>
    <property type="project" value="UniProtKB-KW"/>
</dbReference>
<dbReference type="GO" id="GO:0003919">
    <property type="term" value="F:FMN adenylyltransferase activity"/>
    <property type="evidence" value="ECO:0007669"/>
    <property type="project" value="UniProtKB-EC"/>
</dbReference>
<dbReference type="GO" id="GO:0008531">
    <property type="term" value="F:riboflavin kinase activity"/>
    <property type="evidence" value="ECO:0007669"/>
    <property type="project" value="UniProtKB-EC"/>
</dbReference>
<dbReference type="GO" id="GO:0006747">
    <property type="term" value="P:FAD biosynthetic process"/>
    <property type="evidence" value="ECO:0007669"/>
    <property type="project" value="UniProtKB-UniPathway"/>
</dbReference>
<dbReference type="GO" id="GO:0009398">
    <property type="term" value="P:FMN biosynthetic process"/>
    <property type="evidence" value="ECO:0007669"/>
    <property type="project" value="UniProtKB-UniPathway"/>
</dbReference>
<dbReference type="GO" id="GO:0009231">
    <property type="term" value="P:riboflavin biosynthetic process"/>
    <property type="evidence" value="ECO:0007669"/>
    <property type="project" value="InterPro"/>
</dbReference>
<dbReference type="CDD" id="cd02064">
    <property type="entry name" value="FAD_synthetase_N"/>
    <property type="match status" value="1"/>
</dbReference>
<dbReference type="FunFam" id="3.40.50.620:FF:000021">
    <property type="entry name" value="Riboflavin biosynthesis protein"/>
    <property type="match status" value="1"/>
</dbReference>
<dbReference type="Gene3D" id="3.40.50.620">
    <property type="entry name" value="HUPs"/>
    <property type="match status" value="1"/>
</dbReference>
<dbReference type="Gene3D" id="2.40.30.30">
    <property type="entry name" value="Riboflavin kinase-like"/>
    <property type="match status" value="1"/>
</dbReference>
<dbReference type="InterPro" id="IPR015864">
    <property type="entry name" value="FAD_synthase"/>
</dbReference>
<dbReference type="InterPro" id="IPR023468">
    <property type="entry name" value="Riboflavin_kinase"/>
</dbReference>
<dbReference type="InterPro" id="IPR002606">
    <property type="entry name" value="Riboflavin_kinase_bac"/>
</dbReference>
<dbReference type="InterPro" id="IPR015865">
    <property type="entry name" value="Riboflavin_kinase_bac/euk"/>
</dbReference>
<dbReference type="InterPro" id="IPR023465">
    <property type="entry name" value="Riboflavin_kinase_dom_sf"/>
</dbReference>
<dbReference type="InterPro" id="IPR014729">
    <property type="entry name" value="Rossmann-like_a/b/a_fold"/>
</dbReference>
<dbReference type="NCBIfam" id="NF004159">
    <property type="entry name" value="PRK05627.1-2"/>
    <property type="match status" value="1"/>
</dbReference>
<dbReference type="NCBIfam" id="NF004162">
    <property type="entry name" value="PRK05627.1-5"/>
    <property type="match status" value="1"/>
</dbReference>
<dbReference type="NCBIfam" id="NF004163">
    <property type="entry name" value="PRK05627.1-6"/>
    <property type="match status" value="1"/>
</dbReference>
<dbReference type="NCBIfam" id="TIGR00083">
    <property type="entry name" value="ribF"/>
    <property type="match status" value="1"/>
</dbReference>
<dbReference type="PANTHER" id="PTHR22749:SF6">
    <property type="entry name" value="RIBOFLAVIN KINASE"/>
    <property type="match status" value="1"/>
</dbReference>
<dbReference type="PANTHER" id="PTHR22749">
    <property type="entry name" value="RIBOFLAVIN KINASE/FMN ADENYLYLTRANSFERASE"/>
    <property type="match status" value="1"/>
</dbReference>
<dbReference type="Pfam" id="PF06574">
    <property type="entry name" value="FAD_syn"/>
    <property type="match status" value="1"/>
</dbReference>
<dbReference type="Pfam" id="PF01687">
    <property type="entry name" value="Flavokinase"/>
    <property type="match status" value="1"/>
</dbReference>
<dbReference type="PIRSF" id="PIRSF004491">
    <property type="entry name" value="FAD_Synth"/>
    <property type="match status" value="1"/>
</dbReference>
<dbReference type="SMART" id="SM00904">
    <property type="entry name" value="Flavokinase"/>
    <property type="match status" value="1"/>
</dbReference>
<dbReference type="SUPFAM" id="SSF52374">
    <property type="entry name" value="Nucleotidylyl transferase"/>
    <property type="match status" value="1"/>
</dbReference>
<dbReference type="SUPFAM" id="SSF82114">
    <property type="entry name" value="Riboflavin kinase-like"/>
    <property type="match status" value="1"/>
</dbReference>
<comment type="function">
    <text evidence="1">Catalyzes the phosphorylation of riboflavin to FMN followed by the adenylation of FMN to FAD.</text>
</comment>
<comment type="catalytic activity">
    <reaction evidence="1">
        <text>riboflavin + ATP = FMN + ADP + H(+)</text>
        <dbReference type="Rhea" id="RHEA:14357"/>
        <dbReference type="ChEBI" id="CHEBI:15378"/>
        <dbReference type="ChEBI" id="CHEBI:30616"/>
        <dbReference type="ChEBI" id="CHEBI:57986"/>
        <dbReference type="ChEBI" id="CHEBI:58210"/>
        <dbReference type="ChEBI" id="CHEBI:456216"/>
        <dbReference type="EC" id="2.7.1.26"/>
    </reaction>
</comment>
<comment type="catalytic activity">
    <reaction evidence="1">
        <text>FMN + ATP + H(+) = FAD + diphosphate</text>
        <dbReference type="Rhea" id="RHEA:17237"/>
        <dbReference type="ChEBI" id="CHEBI:15378"/>
        <dbReference type="ChEBI" id="CHEBI:30616"/>
        <dbReference type="ChEBI" id="CHEBI:33019"/>
        <dbReference type="ChEBI" id="CHEBI:57692"/>
        <dbReference type="ChEBI" id="CHEBI:58210"/>
        <dbReference type="EC" id="2.7.7.2"/>
    </reaction>
</comment>
<comment type="pathway">
    <text evidence="1">Cofactor biosynthesis; FAD biosynthesis; FAD from FMN: step 1/1.</text>
</comment>
<comment type="pathway">
    <text evidence="1">Cofactor biosynthesis; FMN biosynthesis; FMN from riboflavin (ATP route): step 1/1.</text>
</comment>
<comment type="similarity">
    <text evidence="2">Belongs to the RibF family.</text>
</comment>
<feature type="chain" id="PRO_0000194135" description="Bifunctional riboflavin kinase/FMN adenylyltransferase">
    <location>
        <begin position="1"/>
        <end position="312"/>
    </location>
</feature>
<protein>
    <recommendedName>
        <fullName evidence="1">Bifunctional riboflavin kinase/FMN adenylyltransferase</fullName>
    </recommendedName>
    <alternativeName>
        <fullName evidence="1">Riboflavin biosynthesis protein RibF</fullName>
    </alternativeName>
    <domain>
        <recommendedName>
            <fullName evidence="1">Riboflavin kinase</fullName>
            <ecNumber evidence="1">2.7.1.26</ecNumber>
        </recommendedName>
        <alternativeName>
            <fullName evidence="1">Flavokinase</fullName>
        </alternativeName>
    </domain>
    <domain>
        <recommendedName>
            <fullName evidence="1">FMN adenylyltransferase</fullName>
            <ecNumber evidence="1">2.7.7.2</ecNumber>
        </recommendedName>
        <alternativeName>
            <fullName evidence="1">FAD pyrophosphorylase</fullName>
        </alternativeName>
        <alternativeName>
            <fullName evidence="1">FAD synthase</fullName>
        </alternativeName>
    </domain>
</protein>
<reference key="1">
    <citation type="journal article" date="2002" name="Science">
        <title>50 million years of genomic stasis in endosymbiotic bacteria.</title>
        <authorList>
            <person name="Tamas I."/>
            <person name="Klasson L."/>
            <person name="Canbaeck B."/>
            <person name="Naeslund A.K."/>
            <person name="Eriksson A.-S."/>
            <person name="Wernegreen J.J."/>
            <person name="Sandstroem J.P."/>
            <person name="Moran N.A."/>
            <person name="Andersson S.G.E."/>
        </authorList>
    </citation>
    <scope>NUCLEOTIDE SEQUENCE [LARGE SCALE GENOMIC DNA]</scope>
    <source>
        <strain>Sg</strain>
    </source>
</reference>
<name>RIBF_BUCAP</name>
<evidence type="ECO:0000250" key="1">
    <source>
        <dbReference type="UniProtKB" id="Q59263"/>
    </source>
</evidence>
<evidence type="ECO:0000305" key="2"/>
<keyword id="KW-0067">ATP-binding</keyword>
<keyword id="KW-0274">FAD</keyword>
<keyword id="KW-0285">Flavoprotein</keyword>
<keyword id="KW-0288">FMN</keyword>
<keyword id="KW-0418">Kinase</keyword>
<keyword id="KW-0511">Multifunctional enzyme</keyword>
<keyword id="KW-0547">Nucleotide-binding</keyword>
<keyword id="KW-0548">Nucleotidyltransferase</keyword>
<keyword id="KW-0808">Transferase</keyword>
<organism>
    <name type="scientific">Buchnera aphidicola subsp. Schizaphis graminum (strain Sg)</name>
    <dbReference type="NCBI Taxonomy" id="198804"/>
    <lineage>
        <taxon>Bacteria</taxon>
        <taxon>Pseudomonadati</taxon>
        <taxon>Pseudomonadota</taxon>
        <taxon>Gammaproteobacteria</taxon>
        <taxon>Enterobacterales</taxon>
        <taxon>Erwiniaceae</taxon>
        <taxon>Buchnera</taxon>
    </lineage>
</organism>
<sequence>MKLIRGIHNLKKINSNSAVSIGNFDGVHLGHQKLLSNLYKIGKKNNILTVLILFEPQPLEFLNNKNSPKRLTTIQNKIKYIQSWKIDIILCIKFNESFSSLSAEKFIKNILITKLNIKFIIIGDDFRFGSKRNGNISLLKEIGYQYNFKVIEISSLLYKNKIKISSTNIRKCLLENKIELARKLLGRPFSISGRVIHGNKIGRKLGYPTANISLRKNIPLNNGVYAVKISCFFNKKFVGICNIGIKPSYFSSKKHRLLEVHLFNFNLNLYEEKIEVFLYKKIRNECFFSSKNKLKEQISKDIEIVKKYFNLI</sequence>